<sequence length="155" mass="17648">MQLNLVCVGERMPSWVNEGYEEYARRLPRECALMLREIAPGKRTRNCDIQRILADEGQRMLAAVGGNAHIVTLDVGGKDWSTRELAEVLARWLREGRDIALLVGGPDGLSDACRQRAAESWSLSRMTFPHPLVRVIVAEQLYRAWTLLNNHPYHR</sequence>
<keyword id="KW-0963">Cytoplasm</keyword>
<keyword id="KW-0489">Methyltransferase</keyword>
<keyword id="KW-1185">Reference proteome</keyword>
<keyword id="KW-0698">rRNA processing</keyword>
<keyword id="KW-0949">S-adenosyl-L-methionine</keyword>
<keyword id="KW-0808">Transferase</keyword>
<organism>
    <name type="scientific">Methylococcus capsulatus (strain ATCC 33009 / NCIMB 11132 / Bath)</name>
    <dbReference type="NCBI Taxonomy" id="243233"/>
    <lineage>
        <taxon>Bacteria</taxon>
        <taxon>Pseudomonadati</taxon>
        <taxon>Pseudomonadota</taxon>
        <taxon>Gammaproteobacteria</taxon>
        <taxon>Methylococcales</taxon>
        <taxon>Methylococcaceae</taxon>
        <taxon>Methylococcus</taxon>
    </lineage>
</organism>
<reference key="1">
    <citation type="journal article" date="2004" name="PLoS Biol.">
        <title>Genomic insights into methanotrophy: the complete genome sequence of Methylococcus capsulatus (Bath).</title>
        <authorList>
            <person name="Ward N.L."/>
            <person name="Larsen O."/>
            <person name="Sakwa J."/>
            <person name="Bruseth L."/>
            <person name="Khouri H.M."/>
            <person name="Durkin A.S."/>
            <person name="Dimitrov G."/>
            <person name="Jiang L."/>
            <person name="Scanlan D."/>
            <person name="Kang K.H."/>
            <person name="Lewis M.R."/>
            <person name="Nelson K.E."/>
            <person name="Methe B.A."/>
            <person name="Wu M."/>
            <person name="Heidelberg J.F."/>
            <person name="Paulsen I.T."/>
            <person name="Fouts D.E."/>
            <person name="Ravel J."/>
            <person name="Tettelin H."/>
            <person name="Ren Q."/>
            <person name="Read T.D."/>
            <person name="DeBoy R.T."/>
            <person name="Seshadri R."/>
            <person name="Salzberg S.L."/>
            <person name="Jensen H.B."/>
            <person name="Birkeland N.K."/>
            <person name="Nelson W.C."/>
            <person name="Dodson R.J."/>
            <person name="Grindhaug S.H."/>
            <person name="Holt I.E."/>
            <person name="Eidhammer I."/>
            <person name="Jonasen I."/>
            <person name="Vanaken S."/>
            <person name="Utterback T.R."/>
            <person name="Feldblyum T.V."/>
            <person name="Fraser C.M."/>
            <person name="Lillehaug J.R."/>
            <person name="Eisen J.A."/>
        </authorList>
    </citation>
    <scope>NUCLEOTIDE SEQUENCE [LARGE SCALE GENOMIC DNA]</scope>
    <source>
        <strain>ATCC 33009 / NCIMB 11132 / Bath</strain>
    </source>
</reference>
<accession>Q60BT8</accession>
<name>RLMH_METCA</name>
<evidence type="ECO:0000255" key="1">
    <source>
        <dbReference type="HAMAP-Rule" id="MF_00658"/>
    </source>
</evidence>
<comment type="function">
    <text evidence="1">Specifically methylates the pseudouridine at position 1915 (m3Psi1915) in 23S rRNA.</text>
</comment>
<comment type="catalytic activity">
    <reaction evidence="1">
        <text>pseudouridine(1915) in 23S rRNA + S-adenosyl-L-methionine = N(3)-methylpseudouridine(1915) in 23S rRNA + S-adenosyl-L-homocysteine + H(+)</text>
        <dbReference type="Rhea" id="RHEA:42752"/>
        <dbReference type="Rhea" id="RHEA-COMP:10221"/>
        <dbReference type="Rhea" id="RHEA-COMP:10222"/>
        <dbReference type="ChEBI" id="CHEBI:15378"/>
        <dbReference type="ChEBI" id="CHEBI:57856"/>
        <dbReference type="ChEBI" id="CHEBI:59789"/>
        <dbReference type="ChEBI" id="CHEBI:65314"/>
        <dbReference type="ChEBI" id="CHEBI:74486"/>
        <dbReference type="EC" id="2.1.1.177"/>
    </reaction>
</comment>
<comment type="subunit">
    <text evidence="1">Homodimer.</text>
</comment>
<comment type="subcellular location">
    <subcellularLocation>
        <location evidence="1">Cytoplasm</location>
    </subcellularLocation>
</comment>
<comment type="similarity">
    <text evidence="1">Belongs to the RNA methyltransferase RlmH family.</text>
</comment>
<feature type="chain" id="PRO_0000198143" description="Ribosomal RNA large subunit methyltransferase H">
    <location>
        <begin position="1"/>
        <end position="155"/>
    </location>
</feature>
<feature type="binding site" evidence="1">
    <location>
        <position position="73"/>
    </location>
    <ligand>
        <name>S-adenosyl-L-methionine</name>
        <dbReference type="ChEBI" id="CHEBI:59789"/>
    </ligand>
</feature>
<feature type="binding site" evidence="1">
    <location>
        <position position="104"/>
    </location>
    <ligand>
        <name>S-adenosyl-L-methionine</name>
        <dbReference type="ChEBI" id="CHEBI:59789"/>
    </ligand>
</feature>
<feature type="binding site" evidence="1">
    <location>
        <begin position="123"/>
        <end position="128"/>
    </location>
    <ligand>
        <name>S-adenosyl-L-methionine</name>
        <dbReference type="ChEBI" id="CHEBI:59789"/>
    </ligand>
</feature>
<protein>
    <recommendedName>
        <fullName evidence="1">Ribosomal RNA large subunit methyltransferase H</fullName>
        <ecNumber evidence="1">2.1.1.177</ecNumber>
    </recommendedName>
    <alternativeName>
        <fullName evidence="1">23S rRNA (pseudouridine1915-N3)-methyltransferase</fullName>
    </alternativeName>
    <alternativeName>
        <fullName evidence="1">23S rRNA m3Psi1915 methyltransferase</fullName>
    </alternativeName>
    <alternativeName>
        <fullName evidence="1">rRNA (pseudouridine-N3-)-methyltransferase RlmH</fullName>
    </alternativeName>
</protein>
<dbReference type="EC" id="2.1.1.177" evidence="1"/>
<dbReference type="EMBL" id="AE017282">
    <property type="protein sequence ID" value="AAU90503.1"/>
    <property type="molecule type" value="Genomic_DNA"/>
</dbReference>
<dbReference type="RefSeq" id="WP_010959737.1">
    <property type="nucleotide sequence ID" value="NC_002977.6"/>
</dbReference>
<dbReference type="SMR" id="Q60BT8"/>
<dbReference type="STRING" id="243233.MCA0377"/>
<dbReference type="GeneID" id="88222719"/>
<dbReference type="KEGG" id="mca:MCA0377"/>
<dbReference type="eggNOG" id="COG1576">
    <property type="taxonomic scope" value="Bacteria"/>
</dbReference>
<dbReference type="HOGENOM" id="CLU_100552_1_0_6"/>
<dbReference type="Proteomes" id="UP000006821">
    <property type="component" value="Chromosome"/>
</dbReference>
<dbReference type="GO" id="GO:0005737">
    <property type="term" value="C:cytoplasm"/>
    <property type="evidence" value="ECO:0007669"/>
    <property type="project" value="UniProtKB-SubCell"/>
</dbReference>
<dbReference type="GO" id="GO:0070038">
    <property type="term" value="F:rRNA (pseudouridine-N3-)-methyltransferase activity"/>
    <property type="evidence" value="ECO:0007669"/>
    <property type="project" value="UniProtKB-UniRule"/>
</dbReference>
<dbReference type="CDD" id="cd18081">
    <property type="entry name" value="RlmH-like"/>
    <property type="match status" value="1"/>
</dbReference>
<dbReference type="Gene3D" id="3.40.1280.10">
    <property type="match status" value="1"/>
</dbReference>
<dbReference type="HAMAP" id="MF_00658">
    <property type="entry name" value="23SrRNA_methyltr_H"/>
    <property type="match status" value="1"/>
</dbReference>
<dbReference type="InterPro" id="IPR029028">
    <property type="entry name" value="Alpha/beta_knot_MTases"/>
</dbReference>
<dbReference type="InterPro" id="IPR003742">
    <property type="entry name" value="RlmH-like"/>
</dbReference>
<dbReference type="InterPro" id="IPR029026">
    <property type="entry name" value="tRNA_m1G_MTases_N"/>
</dbReference>
<dbReference type="NCBIfam" id="NF000986">
    <property type="entry name" value="PRK00103.1-4"/>
    <property type="match status" value="1"/>
</dbReference>
<dbReference type="NCBIfam" id="TIGR00246">
    <property type="entry name" value="tRNA_RlmH_YbeA"/>
    <property type="match status" value="1"/>
</dbReference>
<dbReference type="PANTHER" id="PTHR33603">
    <property type="entry name" value="METHYLTRANSFERASE"/>
    <property type="match status" value="1"/>
</dbReference>
<dbReference type="PANTHER" id="PTHR33603:SF1">
    <property type="entry name" value="RIBOSOMAL RNA LARGE SUBUNIT METHYLTRANSFERASE H"/>
    <property type="match status" value="1"/>
</dbReference>
<dbReference type="Pfam" id="PF02590">
    <property type="entry name" value="SPOUT_MTase"/>
    <property type="match status" value="1"/>
</dbReference>
<dbReference type="PIRSF" id="PIRSF004505">
    <property type="entry name" value="MT_bac"/>
    <property type="match status" value="1"/>
</dbReference>
<dbReference type="SUPFAM" id="SSF75217">
    <property type="entry name" value="alpha/beta knot"/>
    <property type="match status" value="1"/>
</dbReference>
<gene>
    <name evidence="1" type="primary">rlmH</name>
    <name type="ordered locus">MCA0377</name>
</gene>
<proteinExistence type="inferred from homology"/>